<accession>C3M9D7</accession>
<organism>
    <name type="scientific">Sinorhizobium fredii (strain NBRC 101917 / NGR234)</name>
    <dbReference type="NCBI Taxonomy" id="394"/>
    <lineage>
        <taxon>Bacteria</taxon>
        <taxon>Pseudomonadati</taxon>
        <taxon>Pseudomonadota</taxon>
        <taxon>Alphaproteobacteria</taxon>
        <taxon>Hyphomicrobiales</taxon>
        <taxon>Rhizobiaceae</taxon>
        <taxon>Sinorhizobium/Ensifer group</taxon>
        <taxon>Sinorhizobium</taxon>
    </lineage>
</organism>
<reference key="1">
    <citation type="journal article" date="2009" name="Appl. Environ. Microbiol.">
        <title>Rhizobium sp. strain NGR234 possesses a remarkable number of secretion systems.</title>
        <authorList>
            <person name="Schmeisser C."/>
            <person name="Liesegang H."/>
            <person name="Krysciak D."/>
            <person name="Bakkou N."/>
            <person name="Le Quere A."/>
            <person name="Wollherr A."/>
            <person name="Heinemeyer I."/>
            <person name="Morgenstern B."/>
            <person name="Pommerening-Roeser A."/>
            <person name="Flores M."/>
            <person name="Palacios R."/>
            <person name="Brenner S."/>
            <person name="Gottschalk G."/>
            <person name="Schmitz R.A."/>
            <person name="Broughton W.J."/>
            <person name="Perret X."/>
            <person name="Strittmatter A.W."/>
            <person name="Streit W.R."/>
        </authorList>
    </citation>
    <scope>NUCLEOTIDE SEQUENCE [LARGE SCALE GENOMIC DNA]</scope>
    <source>
        <strain>NBRC 101917 / NGR234</strain>
    </source>
</reference>
<keyword id="KW-0067">ATP-binding</keyword>
<keyword id="KW-0963">Cytoplasm</keyword>
<keyword id="KW-0418">Kinase</keyword>
<keyword id="KW-0460">Magnesium</keyword>
<keyword id="KW-0479">Metal-binding</keyword>
<keyword id="KW-0546">Nucleotide metabolism</keyword>
<keyword id="KW-0547">Nucleotide-binding</keyword>
<keyword id="KW-0597">Phosphoprotein</keyword>
<keyword id="KW-1185">Reference proteome</keyword>
<keyword id="KW-0808">Transferase</keyword>
<dbReference type="EC" id="2.7.4.6" evidence="1"/>
<dbReference type="EMBL" id="CP001389">
    <property type="protein sequence ID" value="ACP24703.1"/>
    <property type="molecule type" value="Genomic_DNA"/>
</dbReference>
<dbReference type="RefSeq" id="WP_012707487.1">
    <property type="nucleotide sequence ID" value="NC_012587.1"/>
</dbReference>
<dbReference type="RefSeq" id="YP_002825456.1">
    <property type="nucleotide sequence ID" value="NC_012587.1"/>
</dbReference>
<dbReference type="SMR" id="C3M9D7"/>
<dbReference type="STRING" id="394.NGR_c09130"/>
<dbReference type="KEGG" id="rhi:NGR_c09130"/>
<dbReference type="PATRIC" id="fig|394.7.peg.3730"/>
<dbReference type="eggNOG" id="COG0105">
    <property type="taxonomic scope" value="Bacteria"/>
</dbReference>
<dbReference type="HOGENOM" id="CLU_060216_8_1_5"/>
<dbReference type="OrthoDB" id="9801161at2"/>
<dbReference type="Proteomes" id="UP000001054">
    <property type="component" value="Chromosome"/>
</dbReference>
<dbReference type="GO" id="GO:0005737">
    <property type="term" value="C:cytoplasm"/>
    <property type="evidence" value="ECO:0007669"/>
    <property type="project" value="UniProtKB-SubCell"/>
</dbReference>
<dbReference type="GO" id="GO:0005524">
    <property type="term" value="F:ATP binding"/>
    <property type="evidence" value="ECO:0007669"/>
    <property type="project" value="UniProtKB-UniRule"/>
</dbReference>
<dbReference type="GO" id="GO:0046872">
    <property type="term" value="F:metal ion binding"/>
    <property type="evidence" value="ECO:0007669"/>
    <property type="project" value="UniProtKB-KW"/>
</dbReference>
<dbReference type="GO" id="GO:0004550">
    <property type="term" value="F:nucleoside diphosphate kinase activity"/>
    <property type="evidence" value="ECO:0007669"/>
    <property type="project" value="UniProtKB-UniRule"/>
</dbReference>
<dbReference type="GO" id="GO:0006241">
    <property type="term" value="P:CTP biosynthetic process"/>
    <property type="evidence" value="ECO:0007669"/>
    <property type="project" value="UniProtKB-UniRule"/>
</dbReference>
<dbReference type="GO" id="GO:0006183">
    <property type="term" value="P:GTP biosynthetic process"/>
    <property type="evidence" value="ECO:0007669"/>
    <property type="project" value="UniProtKB-UniRule"/>
</dbReference>
<dbReference type="GO" id="GO:0006228">
    <property type="term" value="P:UTP biosynthetic process"/>
    <property type="evidence" value="ECO:0007669"/>
    <property type="project" value="UniProtKB-UniRule"/>
</dbReference>
<dbReference type="CDD" id="cd04413">
    <property type="entry name" value="NDPk_I"/>
    <property type="match status" value="1"/>
</dbReference>
<dbReference type="FunFam" id="3.30.70.141:FF:000039">
    <property type="entry name" value="Nucleoside diphosphate kinase B"/>
    <property type="match status" value="1"/>
</dbReference>
<dbReference type="Gene3D" id="3.30.70.141">
    <property type="entry name" value="Nucleoside diphosphate kinase-like domain"/>
    <property type="match status" value="1"/>
</dbReference>
<dbReference type="HAMAP" id="MF_00451">
    <property type="entry name" value="NDP_kinase"/>
    <property type="match status" value="1"/>
</dbReference>
<dbReference type="InterPro" id="IPR034907">
    <property type="entry name" value="NDK-like_dom"/>
</dbReference>
<dbReference type="InterPro" id="IPR036850">
    <property type="entry name" value="NDK-like_dom_sf"/>
</dbReference>
<dbReference type="InterPro" id="IPR001564">
    <property type="entry name" value="Nucleoside_diP_kinase"/>
</dbReference>
<dbReference type="InterPro" id="IPR023005">
    <property type="entry name" value="Nucleoside_diP_kinase_AS"/>
</dbReference>
<dbReference type="NCBIfam" id="NF001908">
    <property type="entry name" value="PRK00668.1"/>
    <property type="match status" value="1"/>
</dbReference>
<dbReference type="PANTHER" id="PTHR11349">
    <property type="entry name" value="NUCLEOSIDE DIPHOSPHATE KINASE"/>
    <property type="match status" value="1"/>
</dbReference>
<dbReference type="Pfam" id="PF00334">
    <property type="entry name" value="NDK"/>
    <property type="match status" value="1"/>
</dbReference>
<dbReference type="PRINTS" id="PR01243">
    <property type="entry name" value="NUCDPKINASE"/>
</dbReference>
<dbReference type="SMART" id="SM00562">
    <property type="entry name" value="NDK"/>
    <property type="match status" value="1"/>
</dbReference>
<dbReference type="SUPFAM" id="SSF54919">
    <property type="entry name" value="Nucleoside diphosphate kinase, NDK"/>
    <property type="match status" value="1"/>
</dbReference>
<dbReference type="PROSITE" id="PS00469">
    <property type="entry name" value="NDPK"/>
    <property type="match status" value="1"/>
</dbReference>
<dbReference type="PROSITE" id="PS51374">
    <property type="entry name" value="NDPK_LIKE"/>
    <property type="match status" value="1"/>
</dbReference>
<name>NDK_SINFN</name>
<comment type="function">
    <text evidence="1">Major role in the synthesis of nucleoside triphosphates other than ATP. The ATP gamma phosphate is transferred to the NDP beta phosphate via a ping-pong mechanism, using a phosphorylated active-site intermediate.</text>
</comment>
<comment type="catalytic activity">
    <reaction evidence="1">
        <text>a 2'-deoxyribonucleoside 5'-diphosphate + ATP = a 2'-deoxyribonucleoside 5'-triphosphate + ADP</text>
        <dbReference type="Rhea" id="RHEA:44640"/>
        <dbReference type="ChEBI" id="CHEBI:30616"/>
        <dbReference type="ChEBI" id="CHEBI:61560"/>
        <dbReference type="ChEBI" id="CHEBI:73316"/>
        <dbReference type="ChEBI" id="CHEBI:456216"/>
        <dbReference type="EC" id="2.7.4.6"/>
    </reaction>
</comment>
<comment type="catalytic activity">
    <reaction evidence="1">
        <text>a ribonucleoside 5'-diphosphate + ATP = a ribonucleoside 5'-triphosphate + ADP</text>
        <dbReference type="Rhea" id="RHEA:18113"/>
        <dbReference type="ChEBI" id="CHEBI:30616"/>
        <dbReference type="ChEBI" id="CHEBI:57930"/>
        <dbReference type="ChEBI" id="CHEBI:61557"/>
        <dbReference type="ChEBI" id="CHEBI:456216"/>
        <dbReference type="EC" id="2.7.4.6"/>
    </reaction>
</comment>
<comment type="cofactor">
    <cofactor evidence="1">
        <name>Mg(2+)</name>
        <dbReference type="ChEBI" id="CHEBI:18420"/>
    </cofactor>
</comment>
<comment type="subunit">
    <text evidence="1">Homotetramer.</text>
</comment>
<comment type="subcellular location">
    <subcellularLocation>
        <location evidence="1">Cytoplasm</location>
    </subcellularLocation>
</comment>
<comment type="similarity">
    <text evidence="1">Belongs to the NDK family.</text>
</comment>
<feature type="chain" id="PRO_1000192286" description="Nucleoside diphosphate kinase">
    <location>
        <begin position="1"/>
        <end position="140"/>
    </location>
</feature>
<feature type="active site" description="Pros-phosphohistidine intermediate" evidence="1">
    <location>
        <position position="117"/>
    </location>
</feature>
<feature type="binding site" evidence="1">
    <location>
        <position position="11"/>
    </location>
    <ligand>
        <name>ATP</name>
        <dbReference type="ChEBI" id="CHEBI:30616"/>
    </ligand>
</feature>
<feature type="binding site" evidence="1">
    <location>
        <position position="59"/>
    </location>
    <ligand>
        <name>ATP</name>
        <dbReference type="ChEBI" id="CHEBI:30616"/>
    </ligand>
</feature>
<feature type="binding site" evidence="1">
    <location>
        <position position="87"/>
    </location>
    <ligand>
        <name>ATP</name>
        <dbReference type="ChEBI" id="CHEBI:30616"/>
    </ligand>
</feature>
<feature type="binding site" evidence="1">
    <location>
        <position position="93"/>
    </location>
    <ligand>
        <name>ATP</name>
        <dbReference type="ChEBI" id="CHEBI:30616"/>
    </ligand>
</feature>
<feature type="binding site" evidence="1">
    <location>
        <position position="104"/>
    </location>
    <ligand>
        <name>ATP</name>
        <dbReference type="ChEBI" id="CHEBI:30616"/>
    </ligand>
</feature>
<feature type="binding site" evidence="1">
    <location>
        <position position="114"/>
    </location>
    <ligand>
        <name>ATP</name>
        <dbReference type="ChEBI" id="CHEBI:30616"/>
    </ligand>
</feature>
<evidence type="ECO:0000255" key="1">
    <source>
        <dbReference type="HAMAP-Rule" id="MF_00451"/>
    </source>
</evidence>
<sequence length="140" mass="15270">MAIERTFSMIKPDATKRNLTGAITKMLEDAGLRVVASKRVWMSRREAEGFYAVHKERPFFGELVEFMSSGPTIVQVLEGENAIAKNREVMGATNPANADEGTIRKVHALSIGENSVHGSDGPETAAEEIAYWFAGTEIVG</sequence>
<proteinExistence type="inferred from homology"/>
<gene>
    <name evidence="1" type="primary">ndk</name>
    <name type="ordered locus">NGR_c09130</name>
</gene>
<protein>
    <recommendedName>
        <fullName evidence="1">Nucleoside diphosphate kinase</fullName>
        <shortName evidence="1">NDK</shortName>
        <shortName evidence="1">NDP kinase</shortName>
        <ecNumber evidence="1">2.7.4.6</ecNumber>
    </recommendedName>
    <alternativeName>
        <fullName evidence="1">Nucleoside-2-P kinase</fullName>
    </alternativeName>
</protein>